<protein>
    <recommendedName>
        <fullName evidence="1">Malate synthase G</fullName>
        <ecNumber evidence="1">2.3.3.9</ecNumber>
    </recommendedName>
</protein>
<accession>Q4K4S5</accession>
<name>MASZ_PSEF5</name>
<evidence type="ECO:0000255" key="1">
    <source>
        <dbReference type="HAMAP-Rule" id="MF_00641"/>
    </source>
</evidence>
<reference key="1">
    <citation type="journal article" date="2005" name="Nat. Biotechnol.">
        <title>Complete genome sequence of the plant commensal Pseudomonas fluorescens Pf-5.</title>
        <authorList>
            <person name="Paulsen I.T."/>
            <person name="Press C.M."/>
            <person name="Ravel J."/>
            <person name="Kobayashi D.Y."/>
            <person name="Myers G.S.A."/>
            <person name="Mavrodi D.V."/>
            <person name="DeBoy R.T."/>
            <person name="Seshadri R."/>
            <person name="Ren Q."/>
            <person name="Madupu R."/>
            <person name="Dodson R.J."/>
            <person name="Durkin A.S."/>
            <person name="Brinkac L.M."/>
            <person name="Daugherty S.C."/>
            <person name="Sullivan S.A."/>
            <person name="Rosovitz M.J."/>
            <person name="Gwinn M.L."/>
            <person name="Zhou L."/>
            <person name="Schneider D.J."/>
            <person name="Cartinhour S.W."/>
            <person name="Nelson W.C."/>
            <person name="Weidman J."/>
            <person name="Watkins K."/>
            <person name="Tran K."/>
            <person name="Khouri H."/>
            <person name="Pierson E.A."/>
            <person name="Pierson L.S. III"/>
            <person name="Thomashow L.S."/>
            <person name="Loper J.E."/>
        </authorList>
    </citation>
    <scope>NUCLEOTIDE SEQUENCE [LARGE SCALE GENOMIC DNA]</scope>
    <source>
        <strain>ATCC BAA-477 / NRRL B-23932 / Pf-5</strain>
    </source>
</reference>
<gene>
    <name evidence="1" type="primary">glcB</name>
    <name type="ordered locus">PFL_5700</name>
</gene>
<proteinExistence type="inferred from homology"/>
<sequence>MTEHVQVGGLQVARVLFDFVNNEAIPGTGLTADSFWAGADKVIHDLAPKNKALLAKRDDFQARIDAWHQSRAGQAHDAVAYKAFLQDIGYLLPEAADFQATTQNVDEEIAHMAGPQLVVPVMNARFALNASNARWGSLYDALYGTDAISEADGAEKGKGYNKVRGDKVIAFARAFLDESAPLTAGSHVDSVSYKIVGGKLVVGLKGGSNSGLRNDAQLIGYQGDAAAPTAILLKHNGLHFEIQIDATSPVGQTDAAGVKDLLMEAALTTIMDCEDSVAAVDADDKVVIYRNWLGLMKGDLAEEVSKGGKSFTRTMNADREYTGVNGEPVKLHGRSLLFVRNVGHLMTIDAILDKDGNEVPEGILDGLVTSLASIHNLNGNTSRKNSRTGSMYIVKPKMHGPEEAAFTNELFGRIEEVLNLPRNTLKVGIMDEERRTTVNLKACIKAASERVVFINTGFLDRTGDEIHTSMEAGAMVRKADMKAEKWIGAYENWNVDIGLSTGLQGRAQIGKGMWAMPDLMAAMLEQKIAHPLAGANTAWVPSPTAAALHALHYHKVDVFARQAELAKRARASVDDILTIPLAVNPSWTPEQIKNELDNNAQGILGYVVRWIDQGVGCSKVPDINDVGLMEDRATLRISSQHIANWLRHGVVTQEQVLESLKRMAPVVDRQNASDPLYRPLAPDFDSNIAFQAALELVIEGTKQPNGYTEPVLHRRRREFKAKNGL</sequence>
<dbReference type="EC" id="2.3.3.9" evidence="1"/>
<dbReference type="EMBL" id="CP000076">
    <property type="protein sequence ID" value="AAY94890.1"/>
    <property type="molecule type" value="Genomic_DNA"/>
</dbReference>
<dbReference type="RefSeq" id="WP_011063875.1">
    <property type="nucleotide sequence ID" value="NC_004129.6"/>
</dbReference>
<dbReference type="SMR" id="Q4K4S5"/>
<dbReference type="STRING" id="220664.PFL_5700"/>
<dbReference type="KEGG" id="pfl:PFL_5700"/>
<dbReference type="PATRIC" id="fig|220664.5.peg.5811"/>
<dbReference type="eggNOG" id="COG2225">
    <property type="taxonomic scope" value="Bacteria"/>
</dbReference>
<dbReference type="HOGENOM" id="CLU_028446_1_0_6"/>
<dbReference type="UniPathway" id="UPA00703">
    <property type="reaction ID" value="UER00720"/>
</dbReference>
<dbReference type="Proteomes" id="UP000008540">
    <property type="component" value="Chromosome"/>
</dbReference>
<dbReference type="GO" id="GO:0005829">
    <property type="term" value="C:cytosol"/>
    <property type="evidence" value="ECO:0007669"/>
    <property type="project" value="TreeGrafter"/>
</dbReference>
<dbReference type="GO" id="GO:0000287">
    <property type="term" value="F:magnesium ion binding"/>
    <property type="evidence" value="ECO:0007669"/>
    <property type="project" value="TreeGrafter"/>
</dbReference>
<dbReference type="GO" id="GO:0004474">
    <property type="term" value="F:malate synthase activity"/>
    <property type="evidence" value="ECO:0007669"/>
    <property type="project" value="UniProtKB-UniRule"/>
</dbReference>
<dbReference type="GO" id="GO:0009436">
    <property type="term" value="P:glyoxylate catabolic process"/>
    <property type="evidence" value="ECO:0007669"/>
    <property type="project" value="TreeGrafter"/>
</dbReference>
<dbReference type="GO" id="GO:0006097">
    <property type="term" value="P:glyoxylate cycle"/>
    <property type="evidence" value="ECO:0007669"/>
    <property type="project" value="UniProtKB-UniRule"/>
</dbReference>
<dbReference type="GO" id="GO:0006099">
    <property type="term" value="P:tricarboxylic acid cycle"/>
    <property type="evidence" value="ECO:0007669"/>
    <property type="project" value="UniProtKB-KW"/>
</dbReference>
<dbReference type="CDD" id="cd00728">
    <property type="entry name" value="malate_synt_G"/>
    <property type="match status" value="1"/>
</dbReference>
<dbReference type="FunFam" id="3.20.20.360:FF:000002">
    <property type="entry name" value="Malate synthase G"/>
    <property type="match status" value="1"/>
</dbReference>
<dbReference type="Gene3D" id="3.20.20.360">
    <property type="entry name" value="Malate synthase, domain 3"/>
    <property type="match status" value="2"/>
</dbReference>
<dbReference type="Gene3D" id="1.20.1220.12">
    <property type="entry name" value="Malate synthase, domain III"/>
    <property type="match status" value="1"/>
</dbReference>
<dbReference type="HAMAP" id="MF_00641">
    <property type="entry name" value="Malate_synth_G"/>
    <property type="match status" value="1"/>
</dbReference>
<dbReference type="InterPro" id="IPR044856">
    <property type="entry name" value="Malate_synth_C_sf"/>
</dbReference>
<dbReference type="InterPro" id="IPR011076">
    <property type="entry name" value="Malate_synth_sf"/>
</dbReference>
<dbReference type="InterPro" id="IPR001465">
    <property type="entry name" value="Malate_synthase_TIM"/>
</dbReference>
<dbReference type="InterPro" id="IPR006253">
    <property type="entry name" value="Malate_synthG"/>
</dbReference>
<dbReference type="InterPro" id="IPR048355">
    <property type="entry name" value="MS_C"/>
</dbReference>
<dbReference type="InterPro" id="IPR048356">
    <property type="entry name" value="MS_N"/>
</dbReference>
<dbReference type="InterPro" id="IPR046363">
    <property type="entry name" value="MS_N_TIM-barrel_dom"/>
</dbReference>
<dbReference type="InterPro" id="IPR048357">
    <property type="entry name" value="MSG_insertion"/>
</dbReference>
<dbReference type="NCBIfam" id="TIGR01345">
    <property type="entry name" value="malate_syn_G"/>
    <property type="match status" value="1"/>
</dbReference>
<dbReference type="NCBIfam" id="NF002825">
    <property type="entry name" value="PRK02999.1"/>
    <property type="match status" value="1"/>
</dbReference>
<dbReference type="PANTHER" id="PTHR42739">
    <property type="entry name" value="MALATE SYNTHASE G"/>
    <property type="match status" value="1"/>
</dbReference>
<dbReference type="PANTHER" id="PTHR42739:SF1">
    <property type="entry name" value="MALATE SYNTHASE G"/>
    <property type="match status" value="1"/>
</dbReference>
<dbReference type="Pfam" id="PF20659">
    <property type="entry name" value="MS_C"/>
    <property type="match status" value="1"/>
</dbReference>
<dbReference type="Pfam" id="PF20656">
    <property type="entry name" value="MS_N"/>
    <property type="match status" value="1"/>
</dbReference>
<dbReference type="Pfam" id="PF01274">
    <property type="entry name" value="MS_TIM-barrel"/>
    <property type="match status" value="1"/>
</dbReference>
<dbReference type="Pfam" id="PF20658">
    <property type="entry name" value="MSG_insertion"/>
    <property type="match status" value="1"/>
</dbReference>
<dbReference type="SUPFAM" id="SSF51645">
    <property type="entry name" value="Malate synthase G"/>
    <property type="match status" value="1"/>
</dbReference>
<organism>
    <name type="scientific">Pseudomonas fluorescens (strain ATCC BAA-477 / NRRL B-23932 / Pf-5)</name>
    <dbReference type="NCBI Taxonomy" id="220664"/>
    <lineage>
        <taxon>Bacteria</taxon>
        <taxon>Pseudomonadati</taxon>
        <taxon>Pseudomonadota</taxon>
        <taxon>Gammaproteobacteria</taxon>
        <taxon>Pseudomonadales</taxon>
        <taxon>Pseudomonadaceae</taxon>
        <taxon>Pseudomonas</taxon>
    </lineage>
</organism>
<comment type="function">
    <text evidence="1">Involved in the glycolate utilization. Catalyzes the condensation and subsequent hydrolysis of acetyl-coenzyme A (acetyl-CoA) and glyoxylate to form malate and CoA.</text>
</comment>
<comment type="catalytic activity">
    <reaction evidence="1">
        <text>glyoxylate + acetyl-CoA + H2O = (S)-malate + CoA + H(+)</text>
        <dbReference type="Rhea" id="RHEA:18181"/>
        <dbReference type="ChEBI" id="CHEBI:15377"/>
        <dbReference type="ChEBI" id="CHEBI:15378"/>
        <dbReference type="ChEBI" id="CHEBI:15589"/>
        <dbReference type="ChEBI" id="CHEBI:36655"/>
        <dbReference type="ChEBI" id="CHEBI:57287"/>
        <dbReference type="ChEBI" id="CHEBI:57288"/>
        <dbReference type="EC" id="2.3.3.9"/>
    </reaction>
</comment>
<comment type="cofactor">
    <cofactor evidence="1">
        <name>Mg(2+)</name>
        <dbReference type="ChEBI" id="CHEBI:18420"/>
    </cofactor>
</comment>
<comment type="pathway">
    <text evidence="1">Carbohydrate metabolism; glyoxylate cycle; (S)-malate from isocitrate: step 2/2.</text>
</comment>
<comment type="subunit">
    <text evidence="1">Monomer.</text>
</comment>
<comment type="subcellular location">
    <subcellularLocation>
        <location evidence="1">Cytoplasm</location>
    </subcellularLocation>
</comment>
<comment type="similarity">
    <text evidence="1">Belongs to the malate synthase family. GlcB subfamily.</text>
</comment>
<feature type="chain" id="PRO_1000056919" description="Malate synthase G">
    <location>
        <begin position="1"/>
        <end position="725"/>
    </location>
</feature>
<feature type="active site" description="Proton acceptor" evidence="1">
    <location>
        <position position="340"/>
    </location>
</feature>
<feature type="active site" description="Proton donor" evidence="1">
    <location>
        <position position="631"/>
    </location>
</feature>
<feature type="binding site" evidence="1">
    <location>
        <position position="118"/>
    </location>
    <ligand>
        <name>acetyl-CoA</name>
        <dbReference type="ChEBI" id="CHEBI:57288"/>
    </ligand>
</feature>
<feature type="binding site" evidence="1">
    <location>
        <begin position="125"/>
        <end position="126"/>
    </location>
    <ligand>
        <name>acetyl-CoA</name>
        <dbReference type="ChEBI" id="CHEBI:57288"/>
    </ligand>
</feature>
<feature type="binding site" evidence="1">
    <location>
        <position position="276"/>
    </location>
    <ligand>
        <name>acetyl-CoA</name>
        <dbReference type="ChEBI" id="CHEBI:57288"/>
    </ligand>
</feature>
<feature type="binding site" evidence="1">
    <location>
        <position position="313"/>
    </location>
    <ligand>
        <name>acetyl-CoA</name>
        <dbReference type="ChEBI" id="CHEBI:57288"/>
    </ligand>
</feature>
<feature type="binding site" evidence="1">
    <location>
        <position position="340"/>
    </location>
    <ligand>
        <name>glyoxylate</name>
        <dbReference type="ChEBI" id="CHEBI:36655"/>
    </ligand>
</feature>
<feature type="binding site" evidence="1">
    <location>
        <position position="432"/>
    </location>
    <ligand>
        <name>glyoxylate</name>
        <dbReference type="ChEBI" id="CHEBI:36655"/>
    </ligand>
</feature>
<feature type="binding site" evidence="1">
    <location>
        <position position="432"/>
    </location>
    <ligand>
        <name>Mg(2+)</name>
        <dbReference type="ChEBI" id="CHEBI:18420"/>
    </ligand>
</feature>
<feature type="binding site" evidence="1">
    <location>
        <begin position="457"/>
        <end position="460"/>
    </location>
    <ligand>
        <name>glyoxylate</name>
        <dbReference type="ChEBI" id="CHEBI:36655"/>
    </ligand>
</feature>
<feature type="binding site" evidence="1">
    <location>
        <position position="460"/>
    </location>
    <ligand>
        <name>Mg(2+)</name>
        <dbReference type="ChEBI" id="CHEBI:18420"/>
    </ligand>
</feature>
<feature type="binding site" evidence="1">
    <location>
        <position position="541"/>
    </location>
    <ligand>
        <name>acetyl-CoA</name>
        <dbReference type="ChEBI" id="CHEBI:57288"/>
    </ligand>
</feature>
<feature type="modified residue" description="Cysteine sulfenic acid (-SOH)" evidence="1">
    <location>
        <position position="617"/>
    </location>
</feature>
<keyword id="KW-0963">Cytoplasm</keyword>
<keyword id="KW-0329">Glyoxylate bypass</keyword>
<keyword id="KW-0460">Magnesium</keyword>
<keyword id="KW-0479">Metal-binding</keyword>
<keyword id="KW-0558">Oxidation</keyword>
<keyword id="KW-0808">Transferase</keyword>
<keyword id="KW-0816">Tricarboxylic acid cycle</keyword>